<accession>P55973</accession>
<dbReference type="EMBL" id="AE000511">
    <property type="protein sequence ID" value="AAD07193.1"/>
    <property type="molecule type" value="Genomic_DNA"/>
</dbReference>
<dbReference type="PIR" id="D64535">
    <property type="entry name" value="D64535"/>
</dbReference>
<dbReference type="RefSeq" id="NP_206924.1">
    <property type="nucleotide sequence ID" value="NC_000915.1"/>
</dbReference>
<dbReference type="RefSeq" id="WP_000089203.1">
    <property type="nucleotide sequence ID" value="NC_018939.1"/>
</dbReference>
<dbReference type="SMR" id="P55973"/>
<dbReference type="DIP" id="DIP-3195N"/>
<dbReference type="FunCoup" id="P55973">
    <property type="interactions" value="379"/>
</dbReference>
<dbReference type="IntAct" id="P55973">
    <property type="interactions" value="2"/>
</dbReference>
<dbReference type="MINT" id="P55973"/>
<dbReference type="STRING" id="85962.HP_0124"/>
<dbReference type="PaxDb" id="85962-C694_00615"/>
<dbReference type="EnsemblBacteria" id="AAD07193">
    <property type="protein sequence ID" value="AAD07193"/>
    <property type="gene ID" value="HP_0124"/>
</dbReference>
<dbReference type="KEGG" id="heo:C694_00615"/>
<dbReference type="KEGG" id="hpy:HP_0124"/>
<dbReference type="PATRIC" id="fig|85962.47.peg.134"/>
<dbReference type="eggNOG" id="COG0290">
    <property type="taxonomic scope" value="Bacteria"/>
</dbReference>
<dbReference type="InParanoid" id="P55973"/>
<dbReference type="OrthoDB" id="9806014at2"/>
<dbReference type="PhylomeDB" id="P55973"/>
<dbReference type="Proteomes" id="UP000000429">
    <property type="component" value="Chromosome"/>
</dbReference>
<dbReference type="GO" id="GO:0005829">
    <property type="term" value="C:cytosol"/>
    <property type="evidence" value="ECO:0000318"/>
    <property type="project" value="GO_Central"/>
</dbReference>
<dbReference type="GO" id="GO:0043022">
    <property type="term" value="F:ribosome binding"/>
    <property type="evidence" value="ECO:0000318"/>
    <property type="project" value="GO_Central"/>
</dbReference>
<dbReference type="GO" id="GO:0003743">
    <property type="term" value="F:translation initiation factor activity"/>
    <property type="evidence" value="ECO:0000318"/>
    <property type="project" value="GO_Central"/>
</dbReference>
<dbReference type="GO" id="GO:0032790">
    <property type="term" value="P:ribosome disassembly"/>
    <property type="evidence" value="ECO:0000318"/>
    <property type="project" value="GO_Central"/>
</dbReference>
<dbReference type="FunFam" id="3.10.20.80:FF:000001">
    <property type="entry name" value="Translation initiation factor IF-3"/>
    <property type="match status" value="1"/>
</dbReference>
<dbReference type="Gene3D" id="3.30.110.10">
    <property type="entry name" value="Translation initiation factor 3 (IF-3), C-terminal domain"/>
    <property type="match status" value="1"/>
</dbReference>
<dbReference type="Gene3D" id="3.10.20.80">
    <property type="entry name" value="Translation initiation factor 3 (IF-3), N-terminal domain"/>
    <property type="match status" value="1"/>
</dbReference>
<dbReference type="HAMAP" id="MF_00080">
    <property type="entry name" value="IF_3"/>
    <property type="match status" value="1"/>
</dbReference>
<dbReference type="InterPro" id="IPR036788">
    <property type="entry name" value="T_IF-3_C_sf"/>
</dbReference>
<dbReference type="InterPro" id="IPR036787">
    <property type="entry name" value="T_IF-3_N_sf"/>
</dbReference>
<dbReference type="InterPro" id="IPR019813">
    <property type="entry name" value="Translation_initiation_fac3_CS"/>
</dbReference>
<dbReference type="InterPro" id="IPR001288">
    <property type="entry name" value="Translation_initiation_fac_3"/>
</dbReference>
<dbReference type="InterPro" id="IPR019815">
    <property type="entry name" value="Translation_initiation_fac_3_C"/>
</dbReference>
<dbReference type="InterPro" id="IPR019814">
    <property type="entry name" value="Translation_initiation_fac_3_N"/>
</dbReference>
<dbReference type="NCBIfam" id="TIGR00168">
    <property type="entry name" value="infC"/>
    <property type="match status" value="1"/>
</dbReference>
<dbReference type="PANTHER" id="PTHR10938">
    <property type="entry name" value="TRANSLATION INITIATION FACTOR IF-3"/>
    <property type="match status" value="1"/>
</dbReference>
<dbReference type="PANTHER" id="PTHR10938:SF0">
    <property type="entry name" value="TRANSLATION INITIATION FACTOR IF-3, MITOCHONDRIAL"/>
    <property type="match status" value="1"/>
</dbReference>
<dbReference type="Pfam" id="PF00707">
    <property type="entry name" value="IF3_C"/>
    <property type="match status" value="1"/>
</dbReference>
<dbReference type="Pfam" id="PF05198">
    <property type="entry name" value="IF3_N"/>
    <property type="match status" value="1"/>
</dbReference>
<dbReference type="SUPFAM" id="SSF55200">
    <property type="entry name" value="Translation initiation factor IF3, C-terminal domain"/>
    <property type="match status" value="1"/>
</dbReference>
<dbReference type="SUPFAM" id="SSF54364">
    <property type="entry name" value="Translation initiation factor IF3, N-terminal domain"/>
    <property type="match status" value="1"/>
</dbReference>
<dbReference type="PROSITE" id="PS00938">
    <property type="entry name" value="IF3"/>
    <property type="match status" value="1"/>
</dbReference>
<sequence length="203" mass="23342">MSRNEVLLNGDINFKEVRCVGDNGEVYGIISSKEALHIAQNLGLDLVLISASAKPPVCKVMDYNKFRYQNEKKIKEAKKKQKQIEIKEIKLSTQIAQNDINYKVKHAREFIESNKHVKFKVVLKGRESQNSKAGLDVLFRVQTMMQDLANPEKEPKTEGRFVSWMFVPKAKEAPKNEKKTKENNPPFNRINLMKGENHAKNED</sequence>
<gene>
    <name evidence="1" type="primary">infC</name>
    <name type="ordered locus">HP_0124</name>
</gene>
<feature type="chain" id="PRO_0000177525" description="Translation initiation factor IF-3">
    <location>
        <begin position="1"/>
        <end position="203"/>
    </location>
</feature>
<feature type="region of interest" description="Disordered" evidence="2">
    <location>
        <begin position="172"/>
        <end position="203"/>
    </location>
</feature>
<feature type="compositionally biased region" description="Basic and acidic residues" evidence="2">
    <location>
        <begin position="172"/>
        <end position="182"/>
    </location>
</feature>
<keyword id="KW-0963">Cytoplasm</keyword>
<keyword id="KW-0396">Initiation factor</keyword>
<keyword id="KW-0648">Protein biosynthesis</keyword>
<keyword id="KW-1185">Reference proteome</keyword>
<protein>
    <recommendedName>
        <fullName evidence="1">Translation initiation factor IF-3</fullName>
    </recommendedName>
</protein>
<comment type="function">
    <text evidence="1">IF-3 binds to the 30S ribosomal subunit and shifts the equilibrium between 70S ribosomes and their 50S and 30S subunits in favor of the free subunits, thus enhancing the availability of 30S subunits on which protein synthesis initiation begins.</text>
</comment>
<comment type="subunit">
    <text evidence="1">Monomer.</text>
</comment>
<comment type="subcellular location">
    <subcellularLocation>
        <location evidence="1">Cytoplasm</location>
    </subcellularLocation>
</comment>
<comment type="similarity">
    <text evidence="1">Belongs to the IF-3 family.</text>
</comment>
<reference key="1">
    <citation type="journal article" date="1997" name="Nature">
        <title>The complete genome sequence of the gastric pathogen Helicobacter pylori.</title>
        <authorList>
            <person name="Tomb J.-F."/>
            <person name="White O."/>
            <person name="Kerlavage A.R."/>
            <person name="Clayton R.A."/>
            <person name="Sutton G.G."/>
            <person name="Fleischmann R.D."/>
            <person name="Ketchum K.A."/>
            <person name="Klenk H.-P."/>
            <person name="Gill S.R."/>
            <person name="Dougherty B.A."/>
            <person name="Nelson K.E."/>
            <person name="Quackenbush J."/>
            <person name="Zhou L."/>
            <person name="Kirkness E.F."/>
            <person name="Peterson S.N."/>
            <person name="Loftus B.J."/>
            <person name="Richardson D.L."/>
            <person name="Dodson R.J."/>
            <person name="Khalak H.G."/>
            <person name="Glodek A."/>
            <person name="McKenney K."/>
            <person name="FitzGerald L.M."/>
            <person name="Lee N."/>
            <person name="Adams M.D."/>
            <person name="Hickey E.K."/>
            <person name="Berg D.E."/>
            <person name="Gocayne J.D."/>
            <person name="Utterback T.R."/>
            <person name="Peterson J.D."/>
            <person name="Kelley J.M."/>
            <person name="Cotton M.D."/>
            <person name="Weidman J.F."/>
            <person name="Fujii C."/>
            <person name="Bowman C."/>
            <person name="Watthey L."/>
            <person name="Wallin E."/>
            <person name="Hayes W.S."/>
            <person name="Borodovsky M."/>
            <person name="Karp P.D."/>
            <person name="Smith H.O."/>
            <person name="Fraser C.M."/>
            <person name="Venter J.C."/>
        </authorList>
    </citation>
    <scope>NUCLEOTIDE SEQUENCE [LARGE SCALE GENOMIC DNA]</scope>
    <source>
        <strain>ATCC 700392 / 26695</strain>
    </source>
</reference>
<proteinExistence type="inferred from homology"/>
<name>IF3_HELPY</name>
<evidence type="ECO:0000255" key="1">
    <source>
        <dbReference type="HAMAP-Rule" id="MF_00080"/>
    </source>
</evidence>
<evidence type="ECO:0000256" key="2">
    <source>
        <dbReference type="SAM" id="MobiDB-lite"/>
    </source>
</evidence>
<organism>
    <name type="scientific">Helicobacter pylori (strain ATCC 700392 / 26695)</name>
    <name type="common">Campylobacter pylori</name>
    <dbReference type="NCBI Taxonomy" id="85962"/>
    <lineage>
        <taxon>Bacteria</taxon>
        <taxon>Pseudomonadati</taxon>
        <taxon>Campylobacterota</taxon>
        <taxon>Epsilonproteobacteria</taxon>
        <taxon>Campylobacterales</taxon>
        <taxon>Helicobacteraceae</taxon>
        <taxon>Helicobacter</taxon>
    </lineage>
</organism>